<reference key="1">
    <citation type="journal article" date="1993" name="Eur. J. Biochem.">
        <title>Post-transcriptional and post-translational regulatory steps are crucial in controlling the appearance and stability of thylakoid polypeptides during the transition of etiolated tobacco seedlings to white light.</title>
        <authorList>
            <person name="Palomares R."/>
            <person name="Herrmann R.G."/>
            <person name="Oelmueller R."/>
        </authorList>
    </citation>
    <scope>NUCLEOTIDE SEQUENCE [MRNA]</scope>
    <source>
        <strain>cv. Samsun NN</strain>
        <tissue>Seedling</tissue>
    </source>
</reference>
<keyword id="KW-0150">Chloroplast</keyword>
<keyword id="KW-0464">Manganese</keyword>
<keyword id="KW-0472">Membrane</keyword>
<keyword id="KW-0602">Photosynthesis</keyword>
<keyword id="KW-0604">Photosystem II</keyword>
<keyword id="KW-0934">Plastid</keyword>
<keyword id="KW-1185">Reference proteome</keyword>
<keyword id="KW-0793">Thylakoid</keyword>
<keyword id="KW-0809">Transit peptide</keyword>
<gene>
    <name type="primary">PSBO</name>
</gene>
<accession>Q40459</accession>
<comment type="function">
    <text evidence="1">Stabilizes the manganese cluster which is the primary site of water splitting.</text>
</comment>
<comment type="subcellular location">
    <subcellularLocation>
        <location>Plastid</location>
        <location>Chloroplast thylakoid membrane</location>
    </subcellularLocation>
    <text>Associated with the photosystem II complex.</text>
</comment>
<comment type="similarity">
    <text evidence="3">Belongs to the PsbO family.</text>
</comment>
<proteinExistence type="evidence at transcript level"/>
<dbReference type="EMBL" id="X64349">
    <property type="protein sequence ID" value="CAA45701.1"/>
    <property type="molecule type" value="mRNA"/>
</dbReference>
<dbReference type="PIR" id="T02066">
    <property type="entry name" value="T02066"/>
</dbReference>
<dbReference type="RefSeq" id="NP_001312991.1">
    <property type="nucleotide sequence ID" value="NM_001326062.1"/>
</dbReference>
<dbReference type="SMR" id="Q40459"/>
<dbReference type="STRING" id="4097.Q40459"/>
<dbReference type="PaxDb" id="4097-Q40459"/>
<dbReference type="GeneID" id="107820252"/>
<dbReference type="KEGG" id="nta:107820252"/>
<dbReference type="OMA" id="IFGVECG"/>
<dbReference type="OrthoDB" id="2860at2759"/>
<dbReference type="Proteomes" id="UP000084051">
    <property type="component" value="Unplaced"/>
</dbReference>
<dbReference type="GO" id="GO:0009535">
    <property type="term" value="C:chloroplast thylakoid membrane"/>
    <property type="evidence" value="ECO:0007669"/>
    <property type="project" value="UniProtKB-SubCell"/>
</dbReference>
<dbReference type="GO" id="GO:0009654">
    <property type="term" value="C:photosystem II oxygen evolving complex"/>
    <property type="evidence" value="ECO:0007669"/>
    <property type="project" value="InterPro"/>
</dbReference>
<dbReference type="GO" id="GO:0010242">
    <property type="term" value="F:oxygen evolving activity"/>
    <property type="evidence" value="ECO:0007669"/>
    <property type="project" value="InterPro"/>
</dbReference>
<dbReference type="GO" id="GO:0010207">
    <property type="term" value="P:photosystem II assembly"/>
    <property type="evidence" value="ECO:0007669"/>
    <property type="project" value="InterPro"/>
</dbReference>
<dbReference type="GO" id="GO:0042549">
    <property type="term" value="P:photosystem II stabilization"/>
    <property type="evidence" value="ECO:0007669"/>
    <property type="project" value="InterPro"/>
</dbReference>
<dbReference type="FunFam" id="3.30.2050.10:FF:000001">
    <property type="entry name" value="Oxygen-evolving enhancer protein 1, chloroplastic"/>
    <property type="match status" value="1"/>
</dbReference>
<dbReference type="Gene3D" id="3.30.2050.10">
    <property type="entry name" value="photosynthetic oxygen evolving center domain"/>
    <property type="match status" value="1"/>
</dbReference>
<dbReference type="Gene3D" id="2.40.160.30">
    <property type="entry name" value="Photosystem II, cytochrome c-550 precursor"/>
    <property type="match status" value="1"/>
</dbReference>
<dbReference type="InterPro" id="IPR011250">
    <property type="entry name" value="OMP/PagP_b-brl"/>
</dbReference>
<dbReference type="InterPro" id="IPR002628">
    <property type="entry name" value="PsbO"/>
</dbReference>
<dbReference type="PANTHER" id="PTHR34058">
    <property type="entry name" value="OXYGEN-EVOLVING ENHANCER PROTEIN 1-2, CHLOROPLASTIC"/>
    <property type="match status" value="1"/>
</dbReference>
<dbReference type="Pfam" id="PF01716">
    <property type="entry name" value="MSP"/>
    <property type="match status" value="1"/>
</dbReference>
<dbReference type="SUPFAM" id="SSF56925">
    <property type="entry name" value="OMPA-like"/>
    <property type="match status" value="1"/>
</dbReference>
<evidence type="ECO:0000250" key="1"/>
<evidence type="ECO:0000256" key="2">
    <source>
        <dbReference type="SAM" id="MobiDB-lite"/>
    </source>
</evidence>
<evidence type="ECO:0000305" key="3"/>
<name>PSBO_TOBAC</name>
<feature type="transit peptide" description="Chloroplast" evidence="1">
    <location>
        <begin position="1"/>
        <end position="85"/>
    </location>
</feature>
<feature type="chain" id="PRO_0000029562" description="Oxygen-evolving enhancer protein 1, chloroplastic">
    <location>
        <begin position="86"/>
        <end position="332"/>
    </location>
</feature>
<feature type="region of interest" description="Disordered" evidence="2">
    <location>
        <begin position="262"/>
        <end position="282"/>
    </location>
</feature>
<protein>
    <recommendedName>
        <fullName>Oxygen-evolving enhancer protein 1, chloroplastic</fullName>
        <shortName>OEE1</shortName>
    </recommendedName>
    <alternativeName>
        <fullName>33 kDa subunit of oxygen evolving system of photosystem II</fullName>
    </alternativeName>
    <alternativeName>
        <fullName>33 kDa thylakoid membrane protein</fullName>
    </alternativeName>
    <alternativeName>
        <fullName>OEC 33 kDa subunit</fullName>
    </alternativeName>
</protein>
<sequence>MAASLQAAATLMQPTKVGVAPARNNLQLRSAQSVSKAFGVEPAAARLTCSLQTELKDLAQKFTDAAKVAGFALATSALVVSGANAEGVPKRLTFDEIQSKTYMEVKGTGTANQCPTIDGGVASFAFKPGKYNAKKFCLEPTSFTVKAESVNKNAPPDFQKTKLMTRLTYTLDEIEGPFEVSSDGTVKFEEKDGIDYAAVTVQLPGGERVPFLFTIKQLVASGKPESFSGEFLVPSYRGSSFLDPKGRGGSTGYDNAVALPAGGRGDEEELQKENVKNTSSSTGKITLSVTQSKPETGEVIGVFESIQPSDTDLGAKVPKDVKIQGIWYAQLE</sequence>
<organism>
    <name type="scientific">Nicotiana tabacum</name>
    <name type="common">Common tobacco</name>
    <dbReference type="NCBI Taxonomy" id="4097"/>
    <lineage>
        <taxon>Eukaryota</taxon>
        <taxon>Viridiplantae</taxon>
        <taxon>Streptophyta</taxon>
        <taxon>Embryophyta</taxon>
        <taxon>Tracheophyta</taxon>
        <taxon>Spermatophyta</taxon>
        <taxon>Magnoliopsida</taxon>
        <taxon>eudicotyledons</taxon>
        <taxon>Gunneridae</taxon>
        <taxon>Pentapetalae</taxon>
        <taxon>asterids</taxon>
        <taxon>lamiids</taxon>
        <taxon>Solanales</taxon>
        <taxon>Solanaceae</taxon>
        <taxon>Nicotianoideae</taxon>
        <taxon>Nicotianeae</taxon>
        <taxon>Nicotiana</taxon>
    </lineage>
</organism>